<name>LEP_MYCTO</name>
<organism>
    <name type="scientific">Mycobacterium tuberculosis (strain CDC 1551 / Oshkosh)</name>
    <dbReference type="NCBI Taxonomy" id="83331"/>
    <lineage>
        <taxon>Bacteria</taxon>
        <taxon>Bacillati</taxon>
        <taxon>Actinomycetota</taxon>
        <taxon>Actinomycetes</taxon>
        <taxon>Mycobacteriales</taxon>
        <taxon>Mycobacteriaceae</taxon>
        <taxon>Mycobacterium</taxon>
        <taxon>Mycobacterium tuberculosis complex</taxon>
    </lineage>
</organism>
<accession>P9WKA0</accession>
<accession>L0TAZ5</accession>
<accession>Q10789</accession>
<evidence type="ECO:0000250" key="1"/>
<evidence type="ECO:0000255" key="2"/>
<evidence type="ECO:0000256" key="3">
    <source>
        <dbReference type="SAM" id="MobiDB-lite"/>
    </source>
</evidence>
<evidence type="ECO:0000305" key="4"/>
<gene>
    <name type="primary">lepB</name>
    <name type="ordered locus">MT2971</name>
</gene>
<feature type="chain" id="PRO_0000427690" description="Signal peptidase I">
    <location>
        <begin position="1"/>
        <end position="294"/>
    </location>
</feature>
<feature type="topological domain" description="Cytoplasmic" evidence="2">
    <location>
        <begin position="1"/>
        <end position="66"/>
    </location>
</feature>
<feature type="transmembrane region" description="Helical" evidence="2">
    <location>
        <begin position="67"/>
        <end position="87"/>
    </location>
</feature>
<feature type="topological domain" description="Extracellular" evidence="2">
    <location>
        <begin position="88"/>
        <end position="294"/>
    </location>
</feature>
<feature type="region of interest" description="Disordered" evidence="3">
    <location>
        <begin position="1"/>
        <end position="59"/>
    </location>
</feature>
<feature type="compositionally biased region" description="Basic and acidic residues" evidence="3">
    <location>
        <begin position="47"/>
        <end position="59"/>
    </location>
</feature>
<feature type="active site" evidence="4">
    <location>
        <position position="96"/>
    </location>
</feature>
<feature type="active site" evidence="4">
    <location>
        <position position="174"/>
    </location>
</feature>
<dbReference type="EC" id="3.4.21.89"/>
<dbReference type="EMBL" id="AE000516">
    <property type="protein sequence ID" value="AAK47297.1"/>
    <property type="molecule type" value="Genomic_DNA"/>
</dbReference>
<dbReference type="PIR" id="B70927">
    <property type="entry name" value="B70927"/>
</dbReference>
<dbReference type="RefSeq" id="WP_003414715.1">
    <property type="nucleotide sequence ID" value="NZ_KK341227.1"/>
</dbReference>
<dbReference type="SMR" id="P9WKA0"/>
<dbReference type="MEROPS" id="S26.024"/>
<dbReference type="GeneID" id="45426890"/>
<dbReference type="KEGG" id="mtc:MT2971"/>
<dbReference type="PATRIC" id="fig|83331.31.peg.3211"/>
<dbReference type="HOGENOM" id="CLU_028723_0_0_11"/>
<dbReference type="Proteomes" id="UP000001020">
    <property type="component" value="Chromosome"/>
</dbReference>
<dbReference type="GO" id="GO:0005886">
    <property type="term" value="C:plasma membrane"/>
    <property type="evidence" value="ECO:0007669"/>
    <property type="project" value="UniProtKB-SubCell"/>
</dbReference>
<dbReference type="GO" id="GO:0004252">
    <property type="term" value="F:serine-type endopeptidase activity"/>
    <property type="evidence" value="ECO:0007669"/>
    <property type="project" value="UniProtKB-EC"/>
</dbReference>
<dbReference type="GO" id="GO:0006465">
    <property type="term" value="P:signal peptide processing"/>
    <property type="evidence" value="ECO:0007669"/>
    <property type="project" value="InterPro"/>
</dbReference>
<dbReference type="CDD" id="cd06530">
    <property type="entry name" value="S26_SPase_I"/>
    <property type="match status" value="1"/>
</dbReference>
<dbReference type="Gene3D" id="2.10.109.10">
    <property type="entry name" value="Umud Fragment, subunit A"/>
    <property type="match status" value="1"/>
</dbReference>
<dbReference type="InterPro" id="IPR036286">
    <property type="entry name" value="LexA/Signal_pep-like_sf"/>
</dbReference>
<dbReference type="InterPro" id="IPR000223">
    <property type="entry name" value="Pept_S26A_signal_pept_1"/>
</dbReference>
<dbReference type="InterPro" id="IPR019758">
    <property type="entry name" value="Pept_S26A_signal_pept_1_CS"/>
</dbReference>
<dbReference type="InterPro" id="IPR019756">
    <property type="entry name" value="Pept_S26A_signal_pept_1_Ser-AS"/>
</dbReference>
<dbReference type="InterPro" id="IPR019533">
    <property type="entry name" value="Peptidase_S26"/>
</dbReference>
<dbReference type="NCBIfam" id="TIGR02227">
    <property type="entry name" value="sigpep_I_bact"/>
    <property type="match status" value="1"/>
</dbReference>
<dbReference type="PANTHER" id="PTHR43390:SF1">
    <property type="entry name" value="CHLOROPLAST PROCESSING PEPTIDASE"/>
    <property type="match status" value="1"/>
</dbReference>
<dbReference type="PANTHER" id="PTHR43390">
    <property type="entry name" value="SIGNAL PEPTIDASE I"/>
    <property type="match status" value="1"/>
</dbReference>
<dbReference type="Pfam" id="PF10502">
    <property type="entry name" value="Peptidase_S26"/>
    <property type="match status" value="1"/>
</dbReference>
<dbReference type="PRINTS" id="PR00727">
    <property type="entry name" value="LEADERPTASE"/>
</dbReference>
<dbReference type="SUPFAM" id="SSF51306">
    <property type="entry name" value="LexA/Signal peptidase"/>
    <property type="match status" value="1"/>
</dbReference>
<dbReference type="PROSITE" id="PS00501">
    <property type="entry name" value="SPASE_I_1"/>
    <property type="match status" value="1"/>
</dbReference>
<dbReference type="PROSITE" id="PS00761">
    <property type="entry name" value="SPASE_I_3"/>
    <property type="match status" value="1"/>
</dbReference>
<protein>
    <recommendedName>
        <fullName>Signal peptidase I</fullName>
        <shortName>SPase I</shortName>
        <ecNumber>3.4.21.89</ecNumber>
    </recommendedName>
    <alternativeName>
        <fullName>Leader peptidase I</fullName>
    </alternativeName>
</protein>
<proteinExistence type="inferred from homology"/>
<reference key="1">
    <citation type="journal article" date="2002" name="J. Bacteriol.">
        <title>Whole-genome comparison of Mycobacterium tuberculosis clinical and laboratory strains.</title>
        <authorList>
            <person name="Fleischmann R.D."/>
            <person name="Alland D."/>
            <person name="Eisen J.A."/>
            <person name="Carpenter L."/>
            <person name="White O."/>
            <person name="Peterson J.D."/>
            <person name="DeBoy R.T."/>
            <person name="Dodson R.J."/>
            <person name="Gwinn M.L."/>
            <person name="Haft D.H."/>
            <person name="Hickey E.K."/>
            <person name="Kolonay J.F."/>
            <person name="Nelson W.C."/>
            <person name="Umayam L.A."/>
            <person name="Ermolaeva M.D."/>
            <person name="Salzberg S.L."/>
            <person name="Delcher A."/>
            <person name="Utterback T.R."/>
            <person name="Weidman J.F."/>
            <person name="Khouri H.M."/>
            <person name="Gill J."/>
            <person name="Mikula A."/>
            <person name="Bishai W."/>
            <person name="Jacobs W.R. Jr."/>
            <person name="Venter J.C."/>
            <person name="Fraser C.M."/>
        </authorList>
    </citation>
    <scope>NUCLEOTIDE SEQUENCE [LARGE SCALE GENOMIC DNA]</scope>
    <source>
        <strain>CDC 1551 / Oshkosh</strain>
    </source>
</reference>
<keyword id="KW-1003">Cell membrane</keyword>
<keyword id="KW-0378">Hydrolase</keyword>
<keyword id="KW-0472">Membrane</keyword>
<keyword id="KW-0645">Protease</keyword>
<keyword id="KW-1185">Reference proteome</keyword>
<keyword id="KW-0812">Transmembrane</keyword>
<keyword id="KW-1133">Transmembrane helix</keyword>
<comment type="catalytic activity">
    <reaction>
        <text>Cleavage of hydrophobic, N-terminal signal or leader sequences from secreted and periplasmic proteins.</text>
        <dbReference type="EC" id="3.4.21.89"/>
    </reaction>
</comment>
<comment type="subcellular location">
    <subcellularLocation>
        <location evidence="1">Cell membrane</location>
        <topology evidence="1">Single-pass type II membrane protein</topology>
    </subcellularLocation>
</comment>
<comment type="similarity">
    <text evidence="4">Belongs to the peptidase S26 family.</text>
</comment>
<sequence length="294" mass="31880">MTETTDSPSERQPGPAEPELSSRDPDIAGQVFDAAPFDAAPDADSEGDSKAAKTDEPRPAKRSTLREFAVLAVIAVVLYYVMLTFVARPYLIPSESMEPTLHGCSTCVGDRIMVDKLSYRFGSPQPGDVIVFRGPPSWNVGYKSIRSHNVAVRWVQNALSFIGFVPPDENDLVKRVIAVGGQTVQCRSDTGLTVNGRPLKEPYLDPATMMADPSIYPCLGSEFGPVTVPPGRVWVMGDNRTHSADSRAHCPLLCTDDPLPGTVPVANVIGKARLIVWPPSRWGVVRSVNPQQGR</sequence>